<organism>
    <name type="scientific">Yersinia pseudotuberculosis serotype O:3 (strain YPIII)</name>
    <dbReference type="NCBI Taxonomy" id="502800"/>
    <lineage>
        <taxon>Bacteria</taxon>
        <taxon>Pseudomonadati</taxon>
        <taxon>Pseudomonadota</taxon>
        <taxon>Gammaproteobacteria</taxon>
        <taxon>Enterobacterales</taxon>
        <taxon>Yersiniaceae</taxon>
        <taxon>Yersinia</taxon>
    </lineage>
</organism>
<proteinExistence type="inferred from homology"/>
<accession>B1JPU8</accession>
<dbReference type="EMBL" id="CP000950">
    <property type="protein sequence ID" value="ACA68791.1"/>
    <property type="molecule type" value="Genomic_DNA"/>
</dbReference>
<dbReference type="SMR" id="B1JPU8"/>
<dbReference type="KEGG" id="ypy:YPK_2514"/>
<dbReference type="PATRIC" id="fig|502800.11.peg.3208"/>
<dbReference type="GO" id="GO:0005829">
    <property type="term" value="C:cytosol"/>
    <property type="evidence" value="ECO:0007669"/>
    <property type="project" value="TreeGrafter"/>
</dbReference>
<dbReference type="HAMAP" id="MF_00683">
    <property type="entry name" value="Pole_loc_TmaR"/>
    <property type="match status" value="1"/>
</dbReference>
<dbReference type="InterPro" id="IPR007458">
    <property type="entry name" value="DUF496"/>
</dbReference>
<dbReference type="InterPro" id="IPR053375">
    <property type="entry name" value="UPF0265"/>
</dbReference>
<dbReference type="NCBIfam" id="NF003844">
    <property type="entry name" value="PRK05423.1"/>
    <property type="match status" value="1"/>
</dbReference>
<dbReference type="NCBIfam" id="NF040881">
    <property type="entry name" value="PTS_reg_TmaR"/>
    <property type="match status" value="1"/>
</dbReference>
<dbReference type="PANTHER" id="PTHR39591">
    <property type="entry name" value="UPF0265 PROTEIN YEEX"/>
    <property type="match status" value="1"/>
</dbReference>
<dbReference type="PANTHER" id="PTHR39591:SF1">
    <property type="entry name" value="UPF0265 PROTEIN YEEX"/>
    <property type="match status" value="1"/>
</dbReference>
<dbReference type="Pfam" id="PF04363">
    <property type="entry name" value="DUF496"/>
    <property type="match status" value="1"/>
</dbReference>
<dbReference type="PIRSF" id="PIRSF028773">
    <property type="entry name" value="UCP028773"/>
    <property type="match status" value="1"/>
</dbReference>
<name>TMAR_YERPY</name>
<comment type="function">
    <text evidence="1">Pole-localizer protein involved in the regulation of several cellular processes.</text>
</comment>
<comment type="subcellular location">
    <subcellularLocation>
        <location evidence="1">Cytoplasm</location>
    </subcellularLocation>
</comment>
<comment type="similarity">
    <text evidence="1">Belongs to the pole-localizer TmaR family.</text>
</comment>
<evidence type="ECO:0000255" key="1">
    <source>
        <dbReference type="HAMAP-Rule" id="MF_00683"/>
    </source>
</evidence>
<gene>
    <name evidence="1" type="primary">tmaR</name>
    <name type="ordered locus">YPK_2514</name>
</gene>
<feature type="chain" id="PRO_1000131781" description="Pole-localizer protein TmaR">
    <location>
        <begin position="1"/>
        <end position="105"/>
    </location>
</feature>
<feature type="coiled-coil region" evidence="1">
    <location>
        <begin position="22"/>
        <end position="42"/>
    </location>
</feature>
<feature type="coiled-coil region" evidence="1">
    <location>
        <begin position="77"/>
        <end position="104"/>
    </location>
</feature>
<keyword id="KW-0175">Coiled coil</keyword>
<keyword id="KW-0963">Cytoplasm</keyword>
<protein>
    <recommendedName>
        <fullName evidence="1">Pole-localizer protein TmaR</fullName>
    </recommendedName>
</protein>
<sequence length="105" mass="12461">MDNASKPTFQDVLEFVRMFRRKNKLQREIVDNEKKIRDNQKRVLLLDNLSEYIKPGMSIEEVQAIIANMRGDYEDRVDDYIIKNADLSKERRELSKKLKAMGEVK</sequence>
<reference key="1">
    <citation type="submission" date="2008-02" db="EMBL/GenBank/DDBJ databases">
        <title>Complete sequence of Yersinia pseudotuberculosis YPIII.</title>
        <authorList>
            <consortium name="US DOE Joint Genome Institute"/>
            <person name="Copeland A."/>
            <person name="Lucas S."/>
            <person name="Lapidus A."/>
            <person name="Glavina del Rio T."/>
            <person name="Dalin E."/>
            <person name="Tice H."/>
            <person name="Bruce D."/>
            <person name="Goodwin L."/>
            <person name="Pitluck S."/>
            <person name="Munk A.C."/>
            <person name="Brettin T."/>
            <person name="Detter J.C."/>
            <person name="Han C."/>
            <person name="Tapia R."/>
            <person name="Schmutz J."/>
            <person name="Larimer F."/>
            <person name="Land M."/>
            <person name="Hauser L."/>
            <person name="Challacombe J.F."/>
            <person name="Green L."/>
            <person name="Lindler L.E."/>
            <person name="Nikolich M.P."/>
            <person name="Richardson P."/>
        </authorList>
    </citation>
    <scope>NUCLEOTIDE SEQUENCE [LARGE SCALE GENOMIC DNA]</scope>
    <source>
        <strain>YPIII</strain>
    </source>
</reference>